<comment type="function">
    <text evidence="1">Catalyzes the 2-thiolation of uridine at the wobble position (U34) of tRNA, leading to the formation of s(2)U34.</text>
</comment>
<comment type="catalytic activity">
    <reaction evidence="1">
        <text>S-sulfanyl-L-cysteinyl-[protein] + uridine(34) in tRNA + AH2 + ATP = 2-thiouridine(34) in tRNA + L-cysteinyl-[protein] + A + AMP + diphosphate + H(+)</text>
        <dbReference type="Rhea" id="RHEA:47032"/>
        <dbReference type="Rhea" id="RHEA-COMP:10131"/>
        <dbReference type="Rhea" id="RHEA-COMP:11726"/>
        <dbReference type="Rhea" id="RHEA-COMP:11727"/>
        <dbReference type="Rhea" id="RHEA-COMP:11728"/>
        <dbReference type="ChEBI" id="CHEBI:13193"/>
        <dbReference type="ChEBI" id="CHEBI:15378"/>
        <dbReference type="ChEBI" id="CHEBI:17499"/>
        <dbReference type="ChEBI" id="CHEBI:29950"/>
        <dbReference type="ChEBI" id="CHEBI:30616"/>
        <dbReference type="ChEBI" id="CHEBI:33019"/>
        <dbReference type="ChEBI" id="CHEBI:61963"/>
        <dbReference type="ChEBI" id="CHEBI:65315"/>
        <dbReference type="ChEBI" id="CHEBI:87170"/>
        <dbReference type="ChEBI" id="CHEBI:456215"/>
        <dbReference type="EC" id="2.8.1.13"/>
    </reaction>
</comment>
<comment type="subcellular location">
    <subcellularLocation>
        <location evidence="1">Cytoplasm</location>
    </subcellularLocation>
</comment>
<comment type="similarity">
    <text evidence="1">Belongs to the MnmA/TRMU family.</text>
</comment>
<evidence type="ECO:0000255" key="1">
    <source>
        <dbReference type="HAMAP-Rule" id="MF_00144"/>
    </source>
</evidence>
<dbReference type="EC" id="2.8.1.13" evidence="1"/>
<dbReference type="EMBL" id="CP000270">
    <property type="protein sequence ID" value="ABE28989.1"/>
    <property type="molecule type" value="Genomic_DNA"/>
</dbReference>
<dbReference type="RefSeq" id="WP_011486814.1">
    <property type="nucleotide sequence ID" value="NC_007951.1"/>
</dbReference>
<dbReference type="SMR" id="Q145K0"/>
<dbReference type="STRING" id="266265.Bxe_A4010"/>
<dbReference type="KEGG" id="bxb:DR64_1687"/>
<dbReference type="KEGG" id="bxe:Bxe_A4010"/>
<dbReference type="PATRIC" id="fig|266265.5.peg.477"/>
<dbReference type="eggNOG" id="COG0482">
    <property type="taxonomic scope" value="Bacteria"/>
</dbReference>
<dbReference type="OrthoDB" id="9800696at2"/>
<dbReference type="Proteomes" id="UP000001817">
    <property type="component" value="Chromosome 1"/>
</dbReference>
<dbReference type="GO" id="GO:0005737">
    <property type="term" value="C:cytoplasm"/>
    <property type="evidence" value="ECO:0007669"/>
    <property type="project" value="UniProtKB-SubCell"/>
</dbReference>
<dbReference type="GO" id="GO:0005524">
    <property type="term" value="F:ATP binding"/>
    <property type="evidence" value="ECO:0007669"/>
    <property type="project" value="UniProtKB-KW"/>
</dbReference>
<dbReference type="GO" id="GO:0000049">
    <property type="term" value="F:tRNA binding"/>
    <property type="evidence" value="ECO:0007669"/>
    <property type="project" value="UniProtKB-KW"/>
</dbReference>
<dbReference type="GO" id="GO:0103016">
    <property type="term" value="F:tRNA-uridine 2-sulfurtransferase activity"/>
    <property type="evidence" value="ECO:0007669"/>
    <property type="project" value="UniProtKB-EC"/>
</dbReference>
<dbReference type="GO" id="GO:0002143">
    <property type="term" value="P:tRNA wobble position uridine thiolation"/>
    <property type="evidence" value="ECO:0007669"/>
    <property type="project" value="TreeGrafter"/>
</dbReference>
<dbReference type="CDD" id="cd01998">
    <property type="entry name" value="MnmA_TRMU-like"/>
    <property type="match status" value="1"/>
</dbReference>
<dbReference type="FunFam" id="2.30.30.280:FF:000001">
    <property type="entry name" value="tRNA-specific 2-thiouridylase MnmA"/>
    <property type="match status" value="1"/>
</dbReference>
<dbReference type="FunFam" id="2.40.30.10:FF:000023">
    <property type="entry name" value="tRNA-specific 2-thiouridylase MnmA"/>
    <property type="match status" value="1"/>
</dbReference>
<dbReference type="FunFam" id="3.40.50.620:FF:000004">
    <property type="entry name" value="tRNA-specific 2-thiouridylase MnmA"/>
    <property type="match status" value="1"/>
</dbReference>
<dbReference type="Gene3D" id="2.30.30.280">
    <property type="entry name" value="Adenine nucleotide alpha hydrolases-like domains"/>
    <property type="match status" value="1"/>
</dbReference>
<dbReference type="Gene3D" id="3.40.50.620">
    <property type="entry name" value="HUPs"/>
    <property type="match status" value="1"/>
</dbReference>
<dbReference type="Gene3D" id="2.40.30.10">
    <property type="entry name" value="Translation factors"/>
    <property type="match status" value="1"/>
</dbReference>
<dbReference type="HAMAP" id="MF_00144">
    <property type="entry name" value="tRNA_thiouridyl_MnmA"/>
    <property type="match status" value="1"/>
</dbReference>
<dbReference type="InterPro" id="IPR004506">
    <property type="entry name" value="MnmA-like"/>
</dbReference>
<dbReference type="InterPro" id="IPR046885">
    <property type="entry name" value="MnmA-like_C"/>
</dbReference>
<dbReference type="InterPro" id="IPR046884">
    <property type="entry name" value="MnmA-like_central"/>
</dbReference>
<dbReference type="InterPro" id="IPR023382">
    <property type="entry name" value="MnmA-like_central_sf"/>
</dbReference>
<dbReference type="InterPro" id="IPR014729">
    <property type="entry name" value="Rossmann-like_a/b/a_fold"/>
</dbReference>
<dbReference type="NCBIfam" id="NF001138">
    <property type="entry name" value="PRK00143.1"/>
    <property type="match status" value="1"/>
</dbReference>
<dbReference type="NCBIfam" id="TIGR00420">
    <property type="entry name" value="trmU"/>
    <property type="match status" value="1"/>
</dbReference>
<dbReference type="PANTHER" id="PTHR11933:SF5">
    <property type="entry name" value="MITOCHONDRIAL TRNA-SPECIFIC 2-THIOURIDYLASE 1"/>
    <property type="match status" value="1"/>
</dbReference>
<dbReference type="PANTHER" id="PTHR11933">
    <property type="entry name" value="TRNA 5-METHYLAMINOMETHYL-2-THIOURIDYLATE -METHYLTRANSFERASE"/>
    <property type="match status" value="1"/>
</dbReference>
<dbReference type="Pfam" id="PF03054">
    <property type="entry name" value="tRNA_Me_trans"/>
    <property type="match status" value="1"/>
</dbReference>
<dbReference type="Pfam" id="PF20258">
    <property type="entry name" value="tRNA_Me_trans_C"/>
    <property type="match status" value="1"/>
</dbReference>
<dbReference type="Pfam" id="PF20259">
    <property type="entry name" value="tRNA_Me_trans_M"/>
    <property type="match status" value="1"/>
</dbReference>
<dbReference type="SUPFAM" id="SSF52402">
    <property type="entry name" value="Adenine nucleotide alpha hydrolases-like"/>
    <property type="match status" value="1"/>
</dbReference>
<protein>
    <recommendedName>
        <fullName evidence="1">tRNA-specific 2-thiouridylase MnmA</fullName>
        <ecNumber evidence="1">2.8.1.13</ecNumber>
    </recommendedName>
</protein>
<proteinExistence type="inferred from homology"/>
<feature type="chain" id="PRO_0000349566" description="tRNA-specific 2-thiouridylase MnmA">
    <location>
        <begin position="1"/>
        <end position="381"/>
    </location>
</feature>
<feature type="region of interest" description="Interaction with target base in tRNA" evidence="1">
    <location>
        <begin position="95"/>
        <end position="97"/>
    </location>
</feature>
<feature type="region of interest" description="Interaction with tRNA" evidence="1">
    <location>
        <begin position="146"/>
        <end position="148"/>
    </location>
</feature>
<feature type="region of interest" description="Interaction with tRNA" evidence="1">
    <location>
        <begin position="308"/>
        <end position="309"/>
    </location>
</feature>
<feature type="active site" description="Nucleophile" evidence="1">
    <location>
        <position position="100"/>
    </location>
</feature>
<feature type="active site" description="Cysteine persulfide intermediate" evidence="1">
    <location>
        <position position="196"/>
    </location>
</feature>
<feature type="binding site" evidence="1">
    <location>
        <begin position="9"/>
        <end position="16"/>
    </location>
    <ligand>
        <name>ATP</name>
        <dbReference type="ChEBI" id="CHEBI:30616"/>
    </ligand>
</feature>
<feature type="binding site" evidence="1">
    <location>
        <position position="35"/>
    </location>
    <ligand>
        <name>ATP</name>
        <dbReference type="ChEBI" id="CHEBI:30616"/>
    </ligand>
</feature>
<feature type="binding site" evidence="1">
    <location>
        <position position="124"/>
    </location>
    <ligand>
        <name>ATP</name>
        <dbReference type="ChEBI" id="CHEBI:30616"/>
    </ligand>
</feature>
<feature type="site" description="Interaction with tRNA" evidence="1">
    <location>
        <position position="125"/>
    </location>
</feature>
<feature type="site" description="Interaction with tRNA" evidence="1">
    <location>
        <position position="343"/>
    </location>
</feature>
<feature type="disulfide bond" description="Alternate" evidence="1">
    <location>
        <begin position="100"/>
        <end position="196"/>
    </location>
</feature>
<keyword id="KW-0067">ATP-binding</keyword>
<keyword id="KW-0963">Cytoplasm</keyword>
<keyword id="KW-1015">Disulfide bond</keyword>
<keyword id="KW-0547">Nucleotide-binding</keyword>
<keyword id="KW-1185">Reference proteome</keyword>
<keyword id="KW-0694">RNA-binding</keyword>
<keyword id="KW-0808">Transferase</keyword>
<keyword id="KW-0819">tRNA processing</keyword>
<keyword id="KW-0820">tRNA-binding</keyword>
<reference key="1">
    <citation type="journal article" date="2006" name="Proc. Natl. Acad. Sci. U.S.A.">
        <title>Burkholderia xenovorans LB400 harbors a multi-replicon, 9.73-Mbp genome shaped for versatility.</title>
        <authorList>
            <person name="Chain P.S.G."/>
            <person name="Denef V.J."/>
            <person name="Konstantinidis K.T."/>
            <person name="Vergez L.M."/>
            <person name="Agullo L."/>
            <person name="Reyes V.L."/>
            <person name="Hauser L."/>
            <person name="Cordova M."/>
            <person name="Gomez L."/>
            <person name="Gonzalez M."/>
            <person name="Land M."/>
            <person name="Lao V."/>
            <person name="Larimer F."/>
            <person name="LiPuma J.J."/>
            <person name="Mahenthiralingam E."/>
            <person name="Malfatti S.A."/>
            <person name="Marx C.J."/>
            <person name="Parnell J.J."/>
            <person name="Ramette A."/>
            <person name="Richardson P."/>
            <person name="Seeger M."/>
            <person name="Smith D."/>
            <person name="Spilker T."/>
            <person name="Sul W.J."/>
            <person name="Tsoi T.V."/>
            <person name="Ulrich L.E."/>
            <person name="Zhulin I.B."/>
            <person name="Tiedje J.M."/>
        </authorList>
    </citation>
    <scope>NUCLEOTIDE SEQUENCE [LARGE SCALE GENOMIC DNA]</scope>
    <source>
        <strain>LB400</strain>
    </source>
</reference>
<accession>Q145K0</accession>
<gene>
    <name evidence="1" type="primary">mnmA</name>
    <name type="ordered locus">Bxeno_A0451</name>
    <name type="ORF">Bxe_A4010</name>
</gene>
<name>MNMA_PARXL</name>
<organism>
    <name type="scientific">Paraburkholderia xenovorans (strain LB400)</name>
    <dbReference type="NCBI Taxonomy" id="266265"/>
    <lineage>
        <taxon>Bacteria</taxon>
        <taxon>Pseudomonadati</taxon>
        <taxon>Pseudomonadota</taxon>
        <taxon>Betaproteobacteria</taxon>
        <taxon>Burkholderiales</taxon>
        <taxon>Burkholderiaceae</taxon>
        <taxon>Paraburkholderia</taxon>
    </lineage>
</organism>
<sequence>MSKQKVVVGMSGGVDSSVTAWLLKEQGYDVVGLFMKNWEDDDDSEYCSTRQDWIDVVSVADLIGIDVEAVNFAAEYKDRVFAEFLREYSAGRTPNPDVLCNAEIKFKAFLDHAMSLGAQTIATGHYARVRENNGRFELLKALDHTKDQSYFLHRLNQAQLSKTLFPLGEIPKTRVREIAEQIALPNAKKKDSTGICFIGERPFRDFLNRYLPTKPGPMKTTEGKVVGEHIGLAFYTFGQRKGIGLGGSKDGSGEPWFVAGKDIPSNTLYVAQGHDHPWLLSHTLSAGNTSWVAGEPPADGFACGAKTRYRQADAPCTFSSAGAGEGLFELNFDVAQWAVTPGQSAVLYDGDVCLGGGIIEHAVTGQPATRQPQKAALLTAR</sequence>